<name>RBS_CERSP</name>
<sequence>MRITQGCFSFLPDLTDEQISAQVDYCLGRGWAVSLEHTDDPHPRNTYWEMWGMPMFDLRDPKGVMIELDECRKAWPGRYIRINAFDSTRGFETVTMSFIVNRPEVEPSLRMERTEVDGRSIRYTHSIVR</sequence>
<accession>P27998</accession>
<reference key="1">
    <citation type="journal article" date="1991" name="J. Biol. Chem.">
        <title>Nucleotide sequence, transcriptional analysis, and expression of genes encoded within the form I CO2 fixation operon of Rhodobacter sphaeroides.</title>
        <authorList>
            <person name="Gibson J.L."/>
            <person name="Falcone D.L."/>
            <person name="Tabita F.R."/>
        </authorList>
    </citation>
    <scope>NUCLEOTIDE SEQUENCE [GENOMIC DNA]</scope>
    <scope>INDUCTION</scope>
</reference>
<reference key="2">
    <citation type="journal article" date="1999" name="Arch. Biochem. Biophys.">
        <title>Closely related form I ribulose bisphosphate carboxylase/oxygenase molecules that possess different CO2/O2 substrate specificities.</title>
        <authorList>
            <person name="Horken K.M."/>
            <person name="Tabita F.R."/>
        </authorList>
    </citation>
    <scope>FUNCTION</scope>
    <scope>CATALYTIC ACTIVITY</scope>
    <scope>BIOPHYSICOCHEMICAL PROPERTIES</scope>
    <source>
        <strain>FI</strain>
    </source>
</reference>
<proteinExistence type="evidence at protein level"/>
<protein>
    <recommendedName>
        <fullName evidence="1">Ribulose bisphosphate carboxylase small subunit</fullName>
        <shortName evidence="1">RuBisCO small subunit</shortName>
    </recommendedName>
</protein>
<keyword id="KW-0002">3D-structure</keyword>
<keyword id="KW-0113">Calvin cycle</keyword>
<keyword id="KW-0120">Carbon dioxide fixation</keyword>
<keyword id="KW-0602">Photosynthesis</keyword>
<dbReference type="EMBL" id="M64624">
    <property type="protein sequence ID" value="AAA26116.1"/>
    <property type="molecule type" value="Genomic_DNA"/>
</dbReference>
<dbReference type="PIR" id="E40767">
    <property type="entry name" value="RKRFAS"/>
</dbReference>
<dbReference type="PDB" id="5NV3">
    <property type="method" value="EM"/>
    <property type="resolution" value="3.39 A"/>
    <property type="chains" value="I/J/K/L/M/N/O/P=1-129"/>
</dbReference>
<dbReference type="PDBsum" id="5NV3"/>
<dbReference type="EMDB" id="EMD-3700"/>
<dbReference type="EMDB" id="EMD-3701"/>
<dbReference type="EMDB" id="EMD-3702"/>
<dbReference type="SMR" id="P27998"/>
<dbReference type="SABIO-RK" id="P27998"/>
<dbReference type="GO" id="GO:0016984">
    <property type="term" value="F:ribulose-bisphosphate carboxylase activity"/>
    <property type="evidence" value="ECO:0007669"/>
    <property type="project" value="UniProtKB-UniRule"/>
</dbReference>
<dbReference type="GO" id="GO:0019253">
    <property type="term" value="P:reductive pentose-phosphate cycle"/>
    <property type="evidence" value="ECO:0007669"/>
    <property type="project" value="UniProtKB-UniRule"/>
</dbReference>
<dbReference type="CDD" id="cd03527">
    <property type="entry name" value="RuBisCO_small"/>
    <property type="match status" value="1"/>
</dbReference>
<dbReference type="Gene3D" id="3.30.190.10">
    <property type="entry name" value="Ribulose bisphosphate carboxylase, small subunit"/>
    <property type="match status" value="1"/>
</dbReference>
<dbReference type="HAMAP" id="MF_00859">
    <property type="entry name" value="RuBisCO_S_bact"/>
    <property type="match status" value="1"/>
</dbReference>
<dbReference type="InterPro" id="IPR024681">
    <property type="entry name" value="RuBisCO_ssu"/>
</dbReference>
<dbReference type="InterPro" id="IPR000894">
    <property type="entry name" value="RuBisCO_ssu_dom"/>
</dbReference>
<dbReference type="InterPro" id="IPR036385">
    <property type="entry name" value="RuBisCO_ssu_sf"/>
</dbReference>
<dbReference type="PANTHER" id="PTHR31262">
    <property type="entry name" value="RIBULOSE BISPHOSPHATE CARBOXYLASE SMALL CHAIN 1, CHLOROPLASTIC"/>
    <property type="match status" value="1"/>
</dbReference>
<dbReference type="PANTHER" id="PTHR31262:SF23">
    <property type="entry name" value="RIBULOSE BISPHOSPHATE CARBOXYLASE SMALL SUBUNIT"/>
    <property type="match status" value="1"/>
</dbReference>
<dbReference type="Pfam" id="PF00101">
    <property type="entry name" value="RuBisCO_small"/>
    <property type="match status" value="1"/>
</dbReference>
<dbReference type="SMART" id="SM00961">
    <property type="entry name" value="RuBisCO_small"/>
    <property type="match status" value="1"/>
</dbReference>
<dbReference type="SUPFAM" id="SSF55239">
    <property type="entry name" value="RuBisCO, small subunit"/>
    <property type="match status" value="1"/>
</dbReference>
<feature type="chain" id="PRO_0000198622" description="Ribulose bisphosphate carboxylase small subunit">
    <location>
        <begin position="1"/>
        <end position="129"/>
    </location>
</feature>
<feature type="helix" evidence="5">
    <location>
        <begin position="16"/>
        <end position="29"/>
    </location>
</feature>
<feature type="strand" evidence="5">
    <location>
        <begin position="32"/>
        <end position="39"/>
    </location>
</feature>
<feature type="helix" evidence="5">
    <location>
        <begin position="61"/>
        <end position="74"/>
    </location>
</feature>
<feature type="strand" evidence="5">
    <location>
        <begin position="76"/>
        <end position="85"/>
    </location>
</feature>
<feature type="strand" evidence="5">
    <location>
        <begin position="88"/>
        <end position="90"/>
    </location>
</feature>
<feature type="strand" evidence="5">
    <location>
        <begin position="93"/>
        <end position="101"/>
    </location>
</feature>
<feature type="strand" evidence="5">
    <location>
        <begin position="109"/>
        <end position="115"/>
    </location>
</feature>
<feature type="strand" evidence="5">
    <location>
        <begin position="121"/>
        <end position="127"/>
    </location>
</feature>
<comment type="function">
    <text evidence="1 3">RuBisCO catalyzes two reactions: the carboxylation of D-ribulose 1,5-bisphosphate, the primary event in carbon dioxide fixation, as well as the oxidative fragmentation of the pentose substrate. Both reactions occur simultaneously and in competition at the same active site. Although the small subunit is not catalytic it is essential for maximal activity.</text>
</comment>
<comment type="biophysicochemical properties">
    <kinetics>
        <KM evidence="3">50 uM for ribulose 1,5-bisphosphate</KM>
        <KM evidence="3">22 uM for CO(2)</KM>
        <Vmax evidence="3">2.5 umol/min/mg enzyme with CO(2) as substrate</Vmax>
        <text>The CO(2)/O(2) specificity factor (tau) is 56.</text>
    </kinetics>
</comment>
<comment type="subunit">
    <text evidence="1 4">Heterohexadecamer of 8 large and 8 small subunits.</text>
</comment>
<comment type="induction">
    <text evidence="2">Expression of this form I ribulose-bisphosphate carboxylase operon predominates when carbon dioxide is limiting.</text>
</comment>
<comment type="miscellaneous">
    <text evidence="1">The basic functional RuBisCO is composed of a large chain homodimer in a 'head-to-tail' conformation. In form I RuBisCO this homodimer is arranged in a barrel-like tetramer with the small subunits forming a tetrameric 'cap' on each end of the 'barrel'.</text>
</comment>
<comment type="similarity">
    <text evidence="1">Belongs to the RuBisCO small chain family.</text>
</comment>
<organism>
    <name type="scientific">Cereibacter sphaeroides</name>
    <name type="common">Rhodobacter sphaeroides</name>
    <dbReference type="NCBI Taxonomy" id="1063"/>
    <lineage>
        <taxon>Bacteria</taxon>
        <taxon>Pseudomonadati</taxon>
        <taxon>Pseudomonadota</taxon>
        <taxon>Alphaproteobacteria</taxon>
        <taxon>Rhodobacterales</taxon>
        <taxon>Paracoccaceae</taxon>
        <taxon>Cereibacter</taxon>
    </lineage>
</organism>
<gene>
    <name evidence="1" type="primary">cbbS</name>
    <name type="synonym">rbcS</name>
</gene>
<evidence type="ECO:0000255" key="1">
    <source>
        <dbReference type="HAMAP-Rule" id="MF_00859"/>
    </source>
</evidence>
<evidence type="ECO:0000269" key="2">
    <source>
    </source>
</evidence>
<evidence type="ECO:0000269" key="3">
    <source>
    </source>
</evidence>
<evidence type="ECO:0000305" key="4">
    <source>
    </source>
</evidence>
<evidence type="ECO:0007829" key="5">
    <source>
        <dbReference type="PDB" id="5NV3"/>
    </source>
</evidence>